<feature type="chain" id="PRO_1000205512" description="DNA-directed RNA polymerase subunit omega">
    <location>
        <begin position="1"/>
        <end position="73"/>
    </location>
</feature>
<proteinExistence type="inferred from homology"/>
<gene>
    <name evidence="1" type="primary">rpoZ</name>
    <name type="ordered locus">Desal_2588</name>
</gene>
<comment type="function">
    <text evidence="1">Promotes RNA polymerase assembly. Latches the N- and C-terminal regions of the beta' subunit thereby facilitating its interaction with the beta and alpha subunits.</text>
</comment>
<comment type="catalytic activity">
    <reaction evidence="1">
        <text>RNA(n) + a ribonucleoside 5'-triphosphate = RNA(n+1) + diphosphate</text>
        <dbReference type="Rhea" id="RHEA:21248"/>
        <dbReference type="Rhea" id="RHEA-COMP:14527"/>
        <dbReference type="Rhea" id="RHEA-COMP:17342"/>
        <dbReference type="ChEBI" id="CHEBI:33019"/>
        <dbReference type="ChEBI" id="CHEBI:61557"/>
        <dbReference type="ChEBI" id="CHEBI:140395"/>
        <dbReference type="EC" id="2.7.7.6"/>
    </reaction>
</comment>
<comment type="subunit">
    <text evidence="1">The RNAP catalytic core consists of 2 alpha, 1 beta, 1 beta' and 1 omega subunit. When a sigma factor is associated with the core the holoenzyme is formed, which can initiate transcription.</text>
</comment>
<comment type="similarity">
    <text evidence="1">Belongs to the RNA polymerase subunit omega family.</text>
</comment>
<dbReference type="EC" id="2.7.7.6" evidence="1"/>
<dbReference type="EMBL" id="CP001649">
    <property type="protein sequence ID" value="ACS80643.1"/>
    <property type="molecule type" value="Genomic_DNA"/>
</dbReference>
<dbReference type="RefSeq" id="WP_015852459.1">
    <property type="nucleotide sequence ID" value="NC_012881.1"/>
</dbReference>
<dbReference type="SMR" id="C6BYN6"/>
<dbReference type="STRING" id="526222.Desal_2588"/>
<dbReference type="KEGG" id="dsa:Desal_2588"/>
<dbReference type="eggNOG" id="COG1758">
    <property type="taxonomic scope" value="Bacteria"/>
</dbReference>
<dbReference type="HOGENOM" id="CLU_125406_5_1_7"/>
<dbReference type="OrthoDB" id="9796300at2"/>
<dbReference type="Proteomes" id="UP000002601">
    <property type="component" value="Chromosome"/>
</dbReference>
<dbReference type="GO" id="GO:0000428">
    <property type="term" value="C:DNA-directed RNA polymerase complex"/>
    <property type="evidence" value="ECO:0007669"/>
    <property type="project" value="UniProtKB-KW"/>
</dbReference>
<dbReference type="GO" id="GO:0003677">
    <property type="term" value="F:DNA binding"/>
    <property type="evidence" value="ECO:0007669"/>
    <property type="project" value="UniProtKB-UniRule"/>
</dbReference>
<dbReference type="GO" id="GO:0003899">
    <property type="term" value="F:DNA-directed RNA polymerase activity"/>
    <property type="evidence" value="ECO:0007669"/>
    <property type="project" value="UniProtKB-UniRule"/>
</dbReference>
<dbReference type="GO" id="GO:0006351">
    <property type="term" value="P:DNA-templated transcription"/>
    <property type="evidence" value="ECO:0007669"/>
    <property type="project" value="UniProtKB-UniRule"/>
</dbReference>
<dbReference type="Gene3D" id="3.90.940.10">
    <property type="match status" value="1"/>
</dbReference>
<dbReference type="HAMAP" id="MF_00366">
    <property type="entry name" value="RNApol_bact_RpoZ"/>
    <property type="match status" value="1"/>
</dbReference>
<dbReference type="InterPro" id="IPR003716">
    <property type="entry name" value="DNA-dir_RNA_pol_omega"/>
</dbReference>
<dbReference type="InterPro" id="IPR006110">
    <property type="entry name" value="Pol_omega/Rpo6/RPB6"/>
</dbReference>
<dbReference type="InterPro" id="IPR036161">
    <property type="entry name" value="RPB6/omega-like_sf"/>
</dbReference>
<dbReference type="NCBIfam" id="TIGR00690">
    <property type="entry name" value="rpoZ"/>
    <property type="match status" value="1"/>
</dbReference>
<dbReference type="PANTHER" id="PTHR34476">
    <property type="entry name" value="DNA-DIRECTED RNA POLYMERASE SUBUNIT OMEGA"/>
    <property type="match status" value="1"/>
</dbReference>
<dbReference type="PANTHER" id="PTHR34476:SF1">
    <property type="entry name" value="DNA-DIRECTED RNA POLYMERASE SUBUNIT OMEGA"/>
    <property type="match status" value="1"/>
</dbReference>
<dbReference type="Pfam" id="PF01192">
    <property type="entry name" value="RNA_pol_Rpb6"/>
    <property type="match status" value="1"/>
</dbReference>
<dbReference type="SMART" id="SM01409">
    <property type="entry name" value="RNA_pol_Rpb6"/>
    <property type="match status" value="1"/>
</dbReference>
<dbReference type="SUPFAM" id="SSF63562">
    <property type="entry name" value="RPB6/omega subunit-like"/>
    <property type="match status" value="1"/>
</dbReference>
<name>RPOZ_MARSD</name>
<protein>
    <recommendedName>
        <fullName evidence="1">DNA-directed RNA polymerase subunit omega</fullName>
        <shortName evidence="1">RNAP omega subunit</shortName>
        <ecNumber evidence="1">2.7.7.6</ecNumber>
    </recommendedName>
    <alternativeName>
        <fullName evidence="1">RNA polymerase omega subunit</fullName>
    </alternativeName>
    <alternativeName>
        <fullName evidence="1">Transcriptase subunit omega</fullName>
    </alternativeName>
</protein>
<organism>
    <name type="scientific">Maridesulfovibrio salexigens (strain ATCC 14822 / DSM 2638 / NCIMB 8403 / VKM B-1763)</name>
    <name type="common">Desulfovibrio salexigens</name>
    <dbReference type="NCBI Taxonomy" id="526222"/>
    <lineage>
        <taxon>Bacteria</taxon>
        <taxon>Pseudomonadati</taxon>
        <taxon>Thermodesulfobacteriota</taxon>
        <taxon>Desulfovibrionia</taxon>
        <taxon>Desulfovibrionales</taxon>
        <taxon>Desulfovibrionaceae</taxon>
        <taxon>Maridesulfovibrio</taxon>
    </lineage>
</organism>
<evidence type="ECO:0000255" key="1">
    <source>
        <dbReference type="HAMAP-Rule" id="MF_00366"/>
    </source>
</evidence>
<reference key="1">
    <citation type="submission" date="2009-06" db="EMBL/GenBank/DDBJ databases">
        <title>Complete sequence of Desulfovibrio salexigens DSM 2638.</title>
        <authorList>
            <consortium name="US DOE Joint Genome Institute"/>
            <person name="Lucas S."/>
            <person name="Copeland A."/>
            <person name="Lapidus A."/>
            <person name="Glavina del Rio T."/>
            <person name="Tice H."/>
            <person name="Bruce D."/>
            <person name="Goodwin L."/>
            <person name="Pitluck S."/>
            <person name="Munk A.C."/>
            <person name="Brettin T."/>
            <person name="Detter J.C."/>
            <person name="Han C."/>
            <person name="Tapia R."/>
            <person name="Larimer F."/>
            <person name="Land M."/>
            <person name="Hauser L."/>
            <person name="Kyrpides N."/>
            <person name="Anderson I."/>
            <person name="Wall J.D."/>
            <person name="Arkin A.P."/>
            <person name="Dehal P."/>
            <person name="Chivian D."/>
            <person name="Giles B."/>
            <person name="Hazen T.C."/>
        </authorList>
    </citation>
    <scope>NUCLEOTIDE SEQUENCE [LARGE SCALE GENOMIC DNA]</scope>
    <source>
        <strain>ATCC 14822 / DSM 2638 / NCIMB 8403 / VKM B-1763</strain>
    </source>
</reference>
<keyword id="KW-0240">DNA-directed RNA polymerase</keyword>
<keyword id="KW-0548">Nucleotidyltransferase</keyword>
<keyword id="KW-1185">Reference proteome</keyword>
<keyword id="KW-0804">Transcription</keyword>
<keyword id="KW-0808">Transferase</keyword>
<accession>C6BYN6</accession>
<sequence>MARITVEDCLAEVGNRFLIVQMAIKRVKQYREGYSPLVESKNKEIVTALREIAATKVLPESYHTADGKKPGSE</sequence>